<proteinExistence type="inferred from homology"/>
<gene>
    <name type="primary">cbh1</name>
</gene>
<name>GUX1_HYPRU</name>
<sequence length="514" mass="54002">MYQKLALISAFLATARAQSACTLQAETHPPLTWQKCSSGGTCTQQTGSVVIDANWRWTHATNSSTNCYDGNTWSSTLCPDNETCAKNCCLDGAAYASTYGVTTSADSLSIGFVTQSAQKNVGARLYLMASDTTYQEFTLLGNEFSFDVDVSQLPCGLNGALYFVSMDADGGVSKYPTNTAGAKYGTGYCDSQCPRDLKFINGQANVEGWEPSSNNANTGIGGHGSCCSEMDIWEANSISEALTPHPCTTVGQEICDGDSCGGTYSGDRYGGTCDPDGCDWNPYRLGNTSFYGPGSSFTLDTTKKLTVVTQFETSGAINRYYVQNGVTFQQPNAELGDYSGNSLDDDYCAAEEAEFGGSSFSDKGGLTQFKKATSGGMVLVMSLWDDYYANMLWLDSTYPTNETSSTPGAVRGSCSTSSGVPAQLESNSPNAKVVYSNIKFGPIGSTGNSSGGNPPGGNPPGTTTTRRPATSTGSSPGPTQTHYGQCGGIGYSGPTVCASGSTCQVLNPYYSQCL</sequence>
<organism>
    <name type="scientific">Hypocrea rufa</name>
    <name type="common">Trichoderma viride</name>
    <dbReference type="NCBI Taxonomy" id="5547"/>
    <lineage>
        <taxon>Eukaryota</taxon>
        <taxon>Fungi</taxon>
        <taxon>Dikarya</taxon>
        <taxon>Ascomycota</taxon>
        <taxon>Pezizomycotina</taxon>
        <taxon>Sordariomycetes</taxon>
        <taxon>Hypocreomycetidae</taxon>
        <taxon>Hypocreales</taxon>
        <taxon>Hypocreaceae</taxon>
        <taxon>Trichoderma</taxon>
    </lineage>
</organism>
<protein>
    <recommendedName>
        <fullName>Exoglucanase 1</fullName>
        <ecNumber>3.2.1.91</ecNumber>
    </recommendedName>
    <alternativeName>
        <fullName>1,4-beta-cellobiohydrolase</fullName>
    </alternativeName>
    <alternativeName>
        <fullName>Exocellobiohydrolase</fullName>
    </alternativeName>
    <alternativeName>
        <fullName>Exoglucanase I</fullName>
    </alternativeName>
</protein>
<dbReference type="EC" id="3.2.1.91"/>
<dbReference type="EMBL" id="X53931">
    <property type="protein sequence ID" value="CAA37878.1"/>
    <property type="molecule type" value="Genomic_DNA"/>
</dbReference>
<dbReference type="EMBL" id="AB021656">
    <property type="protein sequence ID" value="BAA36215.1"/>
    <property type="molecule type" value="Genomic_DNA"/>
</dbReference>
<dbReference type="PIR" id="S11439">
    <property type="entry name" value="S11439"/>
</dbReference>
<dbReference type="SMR" id="P19355"/>
<dbReference type="CAZy" id="CBM1">
    <property type="family name" value="Carbohydrate-Binding Module Family 1"/>
</dbReference>
<dbReference type="CAZy" id="GH7">
    <property type="family name" value="Glycoside Hydrolase Family 7"/>
</dbReference>
<dbReference type="GlyCosmos" id="P19355">
    <property type="glycosylation" value="3 sites, No reported glycans"/>
</dbReference>
<dbReference type="GO" id="GO:0005576">
    <property type="term" value="C:extracellular region"/>
    <property type="evidence" value="ECO:0007669"/>
    <property type="project" value="InterPro"/>
</dbReference>
<dbReference type="GO" id="GO:0016162">
    <property type="term" value="F:cellulose 1,4-beta-cellobiosidase activity"/>
    <property type="evidence" value="ECO:0007669"/>
    <property type="project" value="UniProtKB-EC"/>
</dbReference>
<dbReference type="GO" id="GO:0030248">
    <property type="term" value="F:cellulose binding"/>
    <property type="evidence" value="ECO:0007669"/>
    <property type="project" value="InterPro"/>
</dbReference>
<dbReference type="GO" id="GO:0030245">
    <property type="term" value="P:cellulose catabolic process"/>
    <property type="evidence" value="ECO:0007669"/>
    <property type="project" value="UniProtKB-KW"/>
</dbReference>
<dbReference type="CDD" id="cd07999">
    <property type="entry name" value="GH7_CBH_EG"/>
    <property type="match status" value="1"/>
</dbReference>
<dbReference type="FunFam" id="2.70.100.10:FF:000001">
    <property type="entry name" value="Glucanase"/>
    <property type="match status" value="1"/>
</dbReference>
<dbReference type="Gene3D" id="2.70.100.10">
    <property type="entry name" value="Glycoside hydrolase, family 7, domain"/>
    <property type="match status" value="1"/>
</dbReference>
<dbReference type="InterPro" id="IPR035971">
    <property type="entry name" value="CBD_sf"/>
</dbReference>
<dbReference type="InterPro" id="IPR000254">
    <property type="entry name" value="Cellulose-bd_dom_fun"/>
</dbReference>
<dbReference type="InterPro" id="IPR013320">
    <property type="entry name" value="ConA-like_dom_sf"/>
</dbReference>
<dbReference type="InterPro" id="IPR001722">
    <property type="entry name" value="Glyco_hydro_7"/>
</dbReference>
<dbReference type="InterPro" id="IPR037019">
    <property type="entry name" value="Glyco_hydro_7_sf"/>
</dbReference>
<dbReference type="PANTHER" id="PTHR33753">
    <property type="entry name" value="1,4-BETA-D-GLUCAN CELLOBIOHYDROLASE B"/>
    <property type="match status" value="1"/>
</dbReference>
<dbReference type="PANTHER" id="PTHR33753:SF2">
    <property type="entry name" value="GLYCOSIDE HYDROLASE FAMILY 7 PROTEIN"/>
    <property type="match status" value="1"/>
</dbReference>
<dbReference type="Pfam" id="PF00734">
    <property type="entry name" value="CBM_1"/>
    <property type="match status" value="1"/>
</dbReference>
<dbReference type="Pfam" id="PF00840">
    <property type="entry name" value="Glyco_hydro_7"/>
    <property type="match status" value="1"/>
</dbReference>
<dbReference type="PRINTS" id="PR00734">
    <property type="entry name" value="GLHYDRLASE7"/>
</dbReference>
<dbReference type="SMART" id="SM00236">
    <property type="entry name" value="fCBD"/>
    <property type="match status" value="1"/>
</dbReference>
<dbReference type="SUPFAM" id="SSF57180">
    <property type="entry name" value="Cellulose-binding domain"/>
    <property type="match status" value="1"/>
</dbReference>
<dbReference type="SUPFAM" id="SSF49899">
    <property type="entry name" value="Concanavalin A-like lectins/glucanases"/>
    <property type="match status" value="1"/>
</dbReference>
<dbReference type="PROSITE" id="PS00562">
    <property type="entry name" value="CBM1_1"/>
    <property type="match status" value="1"/>
</dbReference>
<dbReference type="PROSITE" id="PS51164">
    <property type="entry name" value="CBM1_2"/>
    <property type="match status" value="1"/>
</dbReference>
<feature type="signal peptide">
    <location>
        <begin position="1"/>
        <end position="17"/>
    </location>
</feature>
<feature type="chain" id="PRO_0000007928" description="Exoglucanase 1">
    <location>
        <begin position="18"/>
        <end position="514"/>
    </location>
</feature>
<feature type="domain" description="CBM1" evidence="3">
    <location>
        <begin position="478"/>
        <end position="514"/>
    </location>
</feature>
<feature type="region of interest" description="Catalytic">
    <location>
        <begin position="18"/>
        <end position="453"/>
    </location>
</feature>
<feature type="region of interest" description="Disordered" evidence="4">
    <location>
        <begin position="401"/>
        <end position="427"/>
    </location>
</feature>
<feature type="region of interest" description="Disordered" evidence="4">
    <location>
        <begin position="444"/>
        <end position="481"/>
    </location>
</feature>
<feature type="region of interest" description="Linker">
    <location>
        <begin position="454"/>
        <end position="478"/>
    </location>
</feature>
<feature type="compositionally biased region" description="Low complexity" evidence="4">
    <location>
        <begin position="460"/>
        <end position="479"/>
    </location>
</feature>
<feature type="active site" description="Nucleophile" evidence="1">
    <location>
        <position position="229"/>
    </location>
</feature>
<feature type="active site" description="Proton donor" evidence="1">
    <location>
        <position position="234"/>
    </location>
</feature>
<feature type="glycosylation site" description="N-linked (GlcNAc...) asparagine" evidence="2">
    <location>
        <position position="62"/>
    </location>
</feature>
<feature type="glycosylation site" description="N-linked (GlcNAc...) asparagine" evidence="2">
    <location>
        <position position="81"/>
    </location>
</feature>
<feature type="glycosylation site" description="N-linked (GlcNAc...) asparagine" evidence="2">
    <location>
        <position position="287"/>
    </location>
</feature>
<feature type="disulfide bond" evidence="1">
    <location>
        <begin position="21"/>
        <end position="89"/>
    </location>
</feature>
<feature type="disulfide bond" evidence="1">
    <location>
        <begin position="36"/>
        <end position="42"/>
    </location>
</feature>
<feature type="disulfide bond" evidence="1">
    <location>
        <begin position="67"/>
        <end position="88"/>
    </location>
</feature>
<feature type="disulfide bond" evidence="1">
    <location>
        <begin position="78"/>
        <end position="84"/>
    </location>
</feature>
<feature type="disulfide bond" evidence="1">
    <location>
        <begin position="155"/>
        <end position="414"/>
    </location>
</feature>
<feature type="disulfide bond" evidence="1">
    <location>
        <begin position="189"/>
        <end position="227"/>
    </location>
</feature>
<feature type="disulfide bond" evidence="1">
    <location>
        <begin position="193"/>
        <end position="226"/>
    </location>
</feature>
<feature type="disulfide bond" evidence="1">
    <location>
        <begin position="247"/>
        <end position="273"/>
    </location>
</feature>
<feature type="disulfide bond" evidence="1">
    <location>
        <begin position="255"/>
        <end position="260"/>
    </location>
</feature>
<feature type="disulfide bond" evidence="1">
    <location>
        <begin position="278"/>
        <end position="348"/>
    </location>
</feature>
<feature type="disulfide bond" evidence="1">
    <location>
        <begin position="486"/>
        <end position="503"/>
    </location>
</feature>
<feature type="disulfide bond" evidence="1">
    <location>
        <begin position="497"/>
        <end position="513"/>
    </location>
</feature>
<feature type="sequence conflict" description="In Ref. 1; CAA37878." evidence="5" ref="1">
    <original>S</original>
    <variation>T</variation>
    <location>
        <position position="173"/>
    </location>
</feature>
<feature type="sequence conflict" description="In Ref. 1; CAA37878." evidence="5" ref="1">
    <original>D</original>
    <variation>E</variation>
    <location>
        <position position="256"/>
    </location>
</feature>
<feature type="sequence conflict" description="In Ref. 1; CAA37878." evidence="5" ref="1">
    <original>N</original>
    <variation>D</variation>
    <location>
        <position position="401"/>
    </location>
</feature>
<feature type="sequence conflict" description="In Ref. 1; CAA37878." evidence="5" ref="1">
    <original>C</original>
    <variation>S</variation>
    <location>
        <position position="414"/>
    </location>
</feature>
<feature type="sequence conflict" description="In Ref. 1; CAA37878." evidence="5" ref="1">
    <original>S</original>
    <variation>P</variation>
    <location>
        <position position="449"/>
    </location>
</feature>
<feature type="sequence conflict" description="In Ref. 1." evidence="5" ref="1">
    <location>
        <position position="462"/>
    </location>
</feature>
<feature type="sequence conflict" description="In Ref. 1." evidence="5" ref="1">
    <original>R</original>
    <variation>P</variation>
    <location>
        <position position="466"/>
    </location>
</feature>
<feature type="sequence conflict" description="In Ref. 1; CAA37878." evidence="5" ref="1">
    <original>S</original>
    <variation>I</variation>
    <location>
        <position position="492"/>
    </location>
</feature>
<evidence type="ECO:0000250" key="1"/>
<evidence type="ECO:0000255" key="2"/>
<evidence type="ECO:0000255" key="3">
    <source>
        <dbReference type="PROSITE-ProRule" id="PRU00597"/>
    </source>
</evidence>
<evidence type="ECO:0000256" key="4">
    <source>
        <dbReference type="SAM" id="MobiDB-lite"/>
    </source>
</evidence>
<evidence type="ECO:0000305" key="5"/>
<reference key="1">
    <citation type="journal article" date="1990" name="Nucleic Acids Res.">
        <title>Nucleotide sequence of the cellobiohydrolase gene from Trichoderma viride.</title>
        <authorList>
            <person name="Cheng C."/>
            <person name="Tsukagoshi N."/>
            <person name="Udaka S."/>
        </authorList>
    </citation>
    <scope>NUCLEOTIDE SEQUENCE [GENOMIC DNA]</scope>
</reference>
<reference key="2">
    <citation type="submission" date="1998-12" db="EMBL/GenBank/DDBJ databases">
        <authorList>
            <person name="Watanabe M."/>
        </authorList>
    </citation>
    <scope>NUCLEOTIDE SEQUENCE [GENOMIC DNA]</scope>
    <source>
        <strain>MC300-1</strain>
    </source>
</reference>
<comment type="function">
    <text>The biological conversion of cellulose to glucose generally requires three types of hydrolytic enzymes: (1) Endoglucanases which cut internal beta-1,4-glucosidic bonds; (2) Exocellobiohydrolases that cut the disaccharide cellobiose from the non-reducing end of the cellulose polymer chain; (3) Beta-1,4-glucosidases which hydrolyze the cellobiose and other short cello-oligosaccharides to glucose.</text>
</comment>
<comment type="catalytic activity">
    <reaction>
        <text>Hydrolysis of (1-&gt;4)-beta-D-glucosidic linkages in cellulose and cellotetraose, releasing cellobiose from the non-reducing ends of the chains.</text>
        <dbReference type="EC" id="3.2.1.91"/>
    </reaction>
</comment>
<comment type="similarity">
    <text evidence="5">Belongs to the glycosyl hydrolase 7 (cellulase C) family.</text>
</comment>
<keyword id="KW-0119">Carbohydrate metabolism</keyword>
<keyword id="KW-0136">Cellulose degradation</keyword>
<keyword id="KW-1015">Disulfide bond</keyword>
<keyword id="KW-0325">Glycoprotein</keyword>
<keyword id="KW-0326">Glycosidase</keyword>
<keyword id="KW-0378">Hydrolase</keyword>
<keyword id="KW-0624">Polysaccharide degradation</keyword>
<keyword id="KW-0732">Signal</keyword>
<accession>P19355</accession>
<accession>O93832</accession>